<proteinExistence type="evidence at transcript level"/>
<protein>
    <recommendedName>
        <fullName>EMI domain-containing protein 1</fullName>
    </recommendedName>
    <alternativeName>
        <fullName>Emilin and multimerin domain-containing protein 1</fullName>
        <shortName>Emu1</shortName>
    </alternativeName>
</protein>
<name>EMID1_MOUSE</name>
<accession>Q91VF5</accession>
<evidence type="ECO:0000250" key="1">
    <source>
        <dbReference type="UniProtKB" id="Q96A84"/>
    </source>
</evidence>
<evidence type="ECO:0000255" key="2"/>
<evidence type="ECO:0000255" key="3">
    <source>
        <dbReference type="PROSITE-ProRule" id="PRU00384"/>
    </source>
</evidence>
<evidence type="ECO:0000256" key="4">
    <source>
        <dbReference type="SAM" id="MobiDB-lite"/>
    </source>
</evidence>
<evidence type="ECO:0000269" key="5">
    <source>
    </source>
</evidence>
<evidence type="ECO:0000303" key="6">
    <source>
    </source>
</evidence>
<evidence type="ECO:0000305" key="7"/>
<dbReference type="EMBL" id="AJ416093">
    <property type="protein sequence ID" value="CAC94780.1"/>
    <property type="molecule type" value="mRNA"/>
</dbReference>
<dbReference type="CCDS" id="CCDS24398.1">
    <molecule id="Q91VF5-1"/>
</dbReference>
<dbReference type="CCDS" id="CCDS88125.1">
    <molecule id="Q91VF5-2"/>
</dbReference>
<dbReference type="RefSeq" id="NP_001357932.1">
    <molecule id="Q91VF5-2"/>
    <property type="nucleotide sequence ID" value="NM_001371003.1"/>
</dbReference>
<dbReference type="RefSeq" id="NP_542162.1">
    <molecule id="Q91VF5-1"/>
    <property type="nucleotide sequence ID" value="NM_080595.3"/>
</dbReference>
<dbReference type="FunCoup" id="Q91VF5">
    <property type="interactions" value="18"/>
</dbReference>
<dbReference type="STRING" id="10090.ENSMUSP00000061704"/>
<dbReference type="GlyConnect" id="2282">
    <property type="glycosylation" value="1 N-Linked glycan (1 site)"/>
</dbReference>
<dbReference type="GlyCosmos" id="Q91VF5">
    <property type="glycosylation" value="2 sites, 1 glycan"/>
</dbReference>
<dbReference type="GlyGen" id="Q91VF5">
    <property type="glycosylation" value="5 sites, 3 N-linked glycans (2 sites)"/>
</dbReference>
<dbReference type="iPTMnet" id="Q91VF5"/>
<dbReference type="PhosphoSitePlus" id="Q91VF5"/>
<dbReference type="PaxDb" id="10090-ENSMUSP00000061704"/>
<dbReference type="ProteomicsDB" id="277858">
    <molecule id="Q91VF5-1"/>
</dbReference>
<dbReference type="ProteomicsDB" id="277859">
    <molecule id="Q91VF5-2"/>
</dbReference>
<dbReference type="Antibodypedia" id="248">
    <property type="antibodies" value="89 antibodies from 21 providers"/>
</dbReference>
<dbReference type="DNASU" id="140703"/>
<dbReference type="Ensembl" id="ENSMUST00000062821.13">
    <molecule id="Q91VF5-1"/>
    <property type="protein sequence ID" value="ENSMUSP00000061704.6"/>
    <property type="gene ID" value="ENSMUSG00000034164.18"/>
</dbReference>
<dbReference type="Ensembl" id="ENSMUST00000163299.8">
    <molecule id="Q91VF5-2"/>
    <property type="protein sequence ID" value="ENSMUSP00000131391.2"/>
    <property type="gene ID" value="ENSMUSG00000034164.18"/>
</dbReference>
<dbReference type="GeneID" id="140703"/>
<dbReference type="KEGG" id="mmu:140703"/>
<dbReference type="UCSC" id="uc007hwg.1">
    <molecule id="Q91VF5-1"/>
    <property type="organism name" value="mouse"/>
</dbReference>
<dbReference type="AGR" id="MGI:2155091"/>
<dbReference type="CTD" id="129080"/>
<dbReference type="MGI" id="MGI:2155091">
    <property type="gene designation" value="Emid1"/>
</dbReference>
<dbReference type="VEuPathDB" id="HostDB:ENSMUSG00000034164"/>
<dbReference type="eggNOG" id="ENOG502QSR5">
    <property type="taxonomic scope" value="Eukaryota"/>
</dbReference>
<dbReference type="GeneTree" id="ENSGT00940000161542"/>
<dbReference type="HOGENOM" id="CLU_045268_0_0_1"/>
<dbReference type="InParanoid" id="Q91VF5"/>
<dbReference type="OMA" id="FVEPRWS"/>
<dbReference type="OrthoDB" id="9837521at2759"/>
<dbReference type="PhylomeDB" id="Q91VF5"/>
<dbReference type="TreeFam" id="TF336589"/>
<dbReference type="BioGRID-ORCS" id="140703">
    <property type="hits" value="5 hits in 78 CRISPR screens"/>
</dbReference>
<dbReference type="ChiTaRS" id="Emid1">
    <property type="organism name" value="mouse"/>
</dbReference>
<dbReference type="PRO" id="PR:Q91VF5"/>
<dbReference type="Proteomes" id="UP000000589">
    <property type="component" value="Chromosome 11"/>
</dbReference>
<dbReference type="RNAct" id="Q91VF5">
    <property type="molecule type" value="protein"/>
</dbReference>
<dbReference type="Bgee" id="ENSMUSG00000034164">
    <property type="expression patterns" value="Expressed in metanephric renal vesicle and 172 other cell types or tissues"/>
</dbReference>
<dbReference type="ExpressionAtlas" id="Q91VF5">
    <property type="expression patterns" value="baseline and differential"/>
</dbReference>
<dbReference type="GO" id="GO:0005581">
    <property type="term" value="C:collagen trimer"/>
    <property type="evidence" value="ECO:0007669"/>
    <property type="project" value="UniProtKB-KW"/>
</dbReference>
<dbReference type="GO" id="GO:0062023">
    <property type="term" value="C:collagen-containing extracellular matrix"/>
    <property type="evidence" value="ECO:0007005"/>
    <property type="project" value="BHF-UCL"/>
</dbReference>
<dbReference type="GO" id="GO:0005783">
    <property type="term" value="C:endoplasmic reticulum"/>
    <property type="evidence" value="ECO:0000314"/>
    <property type="project" value="MGI"/>
</dbReference>
<dbReference type="GO" id="GO:0031012">
    <property type="term" value="C:extracellular matrix"/>
    <property type="evidence" value="ECO:0000314"/>
    <property type="project" value="MGI"/>
</dbReference>
<dbReference type="GO" id="GO:0005576">
    <property type="term" value="C:extracellular region"/>
    <property type="evidence" value="ECO:0007669"/>
    <property type="project" value="UniProtKB-KW"/>
</dbReference>
<dbReference type="GO" id="GO:0005794">
    <property type="term" value="C:Golgi apparatus"/>
    <property type="evidence" value="ECO:0000314"/>
    <property type="project" value="MGI"/>
</dbReference>
<dbReference type="InterPro" id="IPR008160">
    <property type="entry name" value="Collagen"/>
</dbReference>
<dbReference type="InterPro" id="IPR050392">
    <property type="entry name" value="Collagen/C1q_domain"/>
</dbReference>
<dbReference type="InterPro" id="IPR011489">
    <property type="entry name" value="EMI_domain"/>
</dbReference>
<dbReference type="PANTHER" id="PTHR15427:SF33">
    <property type="entry name" value="COLLAGEN IV NC1 DOMAIN-CONTAINING PROTEIN"/>
    <property type="match status" value="1"/>
</dbReference>
<dbReference type="PANTHER" id="PTHR15427">
    <property type="entry name" value="EMILIN ELASTIN MICROFIBRIL INTERFACE-LOCATED PROTEIN ELASTIN MICROFIBRIL INTERFACER"/>
    <property type="match status" value="1"/>
</dbReference>
<dbReference type="Pfam" id="PF01391">
    <property type="entry name" value="Collagen"/>
    <property type="match status" value="2"/>
</dbReference>
<dbReference type="Pfam" id="PF07546">
    <property type="entry name" value="EMI"/>
    <property type="match status" value="1"/>
</dbReference>
<dbReference type="PROSITE" id="PS51041">
    <property type="entry name" value="EMI"/>
    <property type="match status" value="1"/>
</dbReference>
<keyword id="KW-0025">Alternative splicing</keyword>
<keyword id="KW-0176">Collagen</keyword>
<keyword id="KW-1015">Disulfide bond</keyword>
<keyword id="KW-0272">Extracellular matrix</keyword>
<keyword id="KW-0325">Glycoprotein</keyword>
<keyword id="KW-1185">Reference proteome</keyword>
<keyword id="KW-0964">Secreted</keyword>
<keyword id="KW-0732">Signal</keyword>
<organism>
    <name type="scientific">Mus musculus</name>
    <name type="common">Mouse</name>
    <dbReference type="NCBI Taxonomy" id="10090"/>
    <lineage>
        <taxon>Eukaryota</taxon>
        <taxon>Metazoa</taxon>
        <taxon>Chordata</taxon>
        <taxon>Craniata</taxon>
        <taxon>Vertebrata</taxon>
        <taxon>Euteleostomi</taxon>
        <taxon>Mammalia</taxon>
        <taxon>Eutheria</taxon>
        <taxon>Euarchontoglires</taxon>
        <taxon>Glires</taxon>
        <taxon>Rodentia</taxon>
        <taxon>Myomorpha</taxon>
        <taxon>Muroidea</taxon>
        <taxon>Muridae</taxon>
        <taxon>Murinae</taxon>
        <taxon>Mus</taxon>
        <taxon>Mus</taxon>
    </lineage>
</organism>
<feature type="signal peptide" evidence="2">
    <location>
        <begin position="1"/>
        <end position="22"/>
    </location>
</feature>
<feature type="chain" id="PRO_0000007824" description="EMI domain-containing protein 1">
    <location>
        <begin position="23"/>
        <end position="444"/>
    </location>
</feature>
<feature type="domain" description="EMI" evidence="3">
    <location>
        <begin position="33"/>
        <end position="106"/>
    </location>
</feature>
<feature type="domain" description="Collagen-like">
    <location>
        <begin position="221"/>
        <end position="371"/>
    </location>
</feature>
<feature type="region of interest" description="Disordered" evidence="4">
    <location>
        <begin position="161"/>
        <end position="374"/>
    </location>
</feature>
<feature type="region of interest" description="Disordered" evidence="4">
    <location>
        <begin position="404"/>
        <end position="444"/>
    </location>
</feature>
<feature type="compositionally biased region" description="Pro residues" evidence="4">
    <location>
        <begin position="222"/>
        <end position="231"/>
    </location>
</feature>
<feature type="compositionally biased region" description="Low complexity" evidence="4">
    <location>
        <begin position="232"/>
        <end position="243"/>
    </location>
</feature>
<feature type="compositionally biased region" description="Pro residues" evidence="4">
    <location>
        <begin position="244"/>
        <end position="264"/>
    </location>
</feature>
<feature type="compositionally biased region" description="Pro residues" evidence="4">
    <location>
        <begin position="292"/>
        <end position="311"/>
    </location>
</feature>
<feature type="glycosylation site" description="O-linked (Fuc) threonine" evidence="1">
    <location>
        <position position="42"/>
    </location>
</feature>
<feature type="glycosylation site" description="N-linked (GlcNAc...) asparagine" evidence="2">
    <location>
        <position position="51"/>
    </location>
</feature>
<feature type="glycosylation site" description="N-linked (GlcNAc...) asparagine" evidence="2">
    <location>
        <position position="136"/>
    </location>
</feature>
<feature type="disulfide bond" evidence="3">
    <location>
        <begin position="37"/>
        <end position="96"/>
    </location>
</feature>
<feature type="disulfide bond" evidence="3">
    <location>
        <begin position="62"/>
        <end position="68"/>
    </location>
</feature>
<feature type="disulfide bond" evidence="3">
    <location>
        <begin position="95"/>
        <end position="104"/>
    </location>
</feature>
<feature type="splice variant" id="VSP_008446" description="In isoform 2." evidence="6">
    <location>
        <begin position="72"/>
        <end position="73"/>
    </location>
</feature>
<gene>
    <name type="primary">Emid1</name>
    <name type="synonym">Emu1</name>
</gene>
<comment type="subunit">
    <text>Homo- or heteromers.</text>
</comment>
<comment type="subcellular location">
    <subcellularLocation>
        <location evidence="5">Secreted</location>
        <location evidence="5">Extracellular space</location>
        <location evidence="5">Extracellular matrix</location>
    </subcellularLocation>
</comment>
<comment type="alternative products">
    <event type="alternative splicing"/>
    <isoform>
        <id>Q91VF5-1</id>
        <name>1</name>
        <sequence type="displayed"/>
    </isoform>
    <isoform>
        <id>Q91VF5-2</id>
        <name>2</name>
        <sequence type="described" ref="VSP_008446"/>
    </isoform>
</comment>
<comment type="developmental stage">
    <text evidence="5">At 9.5 dpc it is expressed in the nephric duct, the dorsal neural tube, the epithelia of the branchial arches, and the optic vesicle. In 14.5 dpc embryos, like in earlier ones, it is expressed in the dorsal spinal cord and the brain, where it is restricted to the proliferating ependymal and cortical cell layers. Expression is also detected in smooth muscles of the digestive tract as well as in the epithelia of the salivary gland, the inner ear, and the developing nephrons of kidney. In early embryos, it is expressed in the epithelium of the branchial arches. At 14.5 dpc, Emu1 is restricted to the epithelium in the advanced developing kidney (at 15.5 dpc and later), transcripts are detected in the epithelium of the developing nephrons and in the collecting duct epithelium.</text>
</comment>
<comment type="PTM">
    <text evidence="1">O-fucosylated at Thr-42 within the EMI domain by FUT10/POFUT3 and FUT11/POFUT4.</text>
</comment>
<comment type="miscellaneous">
    <molecule>Isoform 2</molecule>
    <text evidence="7">May be due to a competing acceptor splice site.</text>
</comment>
<reference key="1">
    <citation type="journal article" date="2002" name="Dev. Biol.">
        <title>Developmental expression and biochemical characterization of Emu family members.</title>
        <authorList>
            <person name="Leimeister C."/>
            <person name="Steidl C."/>
            <person name="Schumacher N."/>
            <person name="Erhard S."/>
            <person name="Gessler M."/>
        </authorList>
    </citation>
    <scope>NUCLEOTIDE SEQUENCE [MRNA] (ISOFORMS 1 AND 2)</scope>
    <scope>FUNCTION</scope>
    <scope>DEVELOPMENTAL STAGE</scope>
</reference>
<sequence length="444" mass="45634">MGGPRAWTLLCLGLLLPGGGAAWSVPGARFSGRRNWCSYVVTRTVSCHVQNGTYLQRVLQNCPWPMGCPGNSYRTVVRPLYKVTYKTVTAREWRCCPGHSGVTCEEGSPGLLEPTWTDSGMRRMAVRPTALSGCLNCSKVSELTERLKALEAKVAVLSVTEQTVPSVPATPEDSALLWGSPAARGSPGDGSLQDRLDSWGLPGPTGPKGGTDSQSPVRIRGPPGPQGPPGRPGQTGAAGTPGKMGPPGPPGPPGPPGPPAPVGPPYGQVSLHGDPLLSNTFTEMGSHWPQGPTGPPGPPGPPGPMGPPGLPGPMGAPGSPGHMGIPGPSGPKGTSGHPGEKGERGLPGEPGPQGLMGVPGEPGPKGDPGEKSHWGEGLHQLREALKILAERVLILETMIGLYEPDLGSGAGPDGTGTPSLLRGKRGGHPTNYPIITPRRRSERS</sequence>